<keyword id="KW-0002">3D-structure</keyword>
<keyword id="KW-0007">Acetylation</keyword>
<keyword id="KW-0227">DNA damage</keyword>
<keyword id="KW-0539">Nucleus</keyword>
<keyword id="KW-1185">Reference proteome</keyword>
<keyword id="KW-0804">Transcription</keyword>
<keyword id="KW-0805">Transcription regulation</keyword>
<keyword id="KW-0808">Transferase</keyword>
<keyword id="KW-0843">Virulence</keyword>
<gene>
    <name type="primary">RTT109</name>
    <name type="ordered locus">CAALFM_CR00410WA</name>
    <name type="ORF">CaO19.7491</name>
</gene>
<evidence type="ECO:0000250" key="1">
    <source>
        <dbReference type="UniProtKB" id="Q07794"/>
    </source>
</evidence>
<evidence type="ECO:0000255" key="2">
    <source>
        <dbReference type="PROSITE-ProRule" id="PRU01064"/>
    </source>
</evidence>
<evidence type="ECO:0000269" key="3">
    <source>
    </source>
</evidence>
<evidence type="ECO:0000269" key="4">
    <source>
    </source>
</evidence>
<evidence type="ECO:0000269" key="5">
    <source>
    </source>
</evidence>
<evidence type="ECO:0000305" key="6"/>
<evidence type="ECO:0000305" key="7">
    <source>
    </source>
</evidence>
<evidence type="ECO:0007829" key="8">
    <source>
        <dbReference type="PDB" id="7BX0"/>
    </source>
</evidence>
<organism>
    <name type="scientific">Candida albicans (strain SC5314 / ATCC MYA-2876)</name>
    <name type="common">Yeast</name>
    <dbReference type="NCBI Taxonomy" id="237561"/>
    <lineage>
        <taxon>Eukaryota</taxon>
        <taxon>Fungi</taxon>
        <taxon>Dikarya</taxon>
        <taxon>Ascomycota</taxon>
        <taxon>Saccharomycotina</taxon>
        <taxon>Pichiomycetes</taxon>
        <taxon>Debaryomycetaceae</taxon>
        <taxon>Candida/Lodderomyces clade</taxon>
        <taxon>Candida</taxon>
    </lineage>
</organism>
<reference key="1">
    <citation type="journal article" date="2004" name="Proc. Natl. Acad. Sci. U.S.A.">
        <title>The diploid genome sequence of Candida albicans.</title>
        <authorList>
            <person name="Jones T."/>
            <person name="Federspiel N.A."/>
            <person name="Chibana H."/>
            <person name="Dungan J."/>
            <person name="Kalman S."/>
            <person name="Magee B.B."/>
            <person name="Newport G."/>
            <person name="Thorstenson Y.R."/>
            <person name="Agabian N."/>
            <person name="Magee P.T."/>
            <person name="Davis R.W."/>
            <person name="Scherer S."/>
        </authorList>
    </citation>
    <scope>NUCLEOTIDE SEQUENCE [LARGE SCALE GENOMIC DNA]</scope>
    <source>
        <strain>SC5314 / ATCC MYA-2876</strain>
    </source>
</reference>
<reference key="2">
    <citation type="journal article" date="2007" name="Genome Biol.">
        <title>Assembly of the Candida albicans genome into sixteen supercontigs aligned on the eight chromosomes.</title>
        <authorList>
            <person name="van het Hoog M."/>
            <person name="Rast T.J."/>
            <person name="Martchenko M."/>
            <person name="Grindle S."/>
            <person name="Dignard D."/>
            <person name="Hogues H."/>
            <person name="Cuomo C."/>
            <person name="Berriman M."/>
            <person name="Scherer S."/>
            <person name="Magee B.B."/>
            <person name="Whiteway M."/>
            <person name="Chibana H."/>
            <person name="Nantel A."/>
            <person name="Magee P.T."/>
        </authorList>
    </citation>
    <scope>GENOME REANNOTATION</scope>
    <source>
        <strain>SC5314 / ATCC MYA-2876</strain>
    </source>
</reference>
<reference key="3">
    <citation type="journal article" date="2013" name="Genome Biol.">
        <title>Assembly of a phased diploid Candida albicans genome facilitates allele-specific measurements and provides a simple model for repeat and indel structure.</title>
        <authorList>
            <person name="Muzzey D."/>
            <person name="Schwartz K."/>
            <person name="Weissman J.S."/>
            <person name="Sherlock G."/>
        </authorList>
    </citation>
    <scope>NUCLEOTIDE SEQUENCE [LARGE SCALE GENOMIC DNA]</scope>
    <scope>GENOME REANNOTATION</scope>
    <source>
        <strain>SC5314 / ATCC MYA-2876</strain>
    </source>
</reference>
<reference key="4">
    <citation type="journal article" date="2010" name="Nat. Med.">
        <title>Modulation of histone H3 lysine 56 acetylation as an antifungal therapeutic strategy.</title>
        <authorList>
            <person name="Wurtele H."/>
            <person name="Tsao S."/>
            <person name="Lepine G."/>
            <person name="Mullick A."/>
            <person name="Tremblay J."/>
            <person name="Drogaris P."/>
            <person name="Lee E.H."/>
            <person name="Thibault P."/>
            <person name="Verreault A."/>
            <person name="Raymond M."/>
        </authorList>
    </citation>
    <scope>FUNCTION</scope>
    <scope>CATALYTIC ACTIVITY</scope>
</reference>
<reference key="5">
    <citation type="journal article" date="2010" name="Proc. Natl. Acad. Sci. U.S.A.">
        <title>Histone acetyltransferase Rtt109 is required for Candida albicans pathogenesis.</title>
        <authorList>
            <person name="Lopes da Rosa J."/>
            <person name="Boyartchuk V.L."/>
            <person name="Zhu L.J."/>
            <person name="Kaufman P.D."/>
        </authorList>
    </citation>
    <scope>FUNCTION</scope>
    <scope>DISRUPTION PHENOTYPE</scope>
</reference>
<reference key="6">
    <citation type="journal article" date="2011" name="Mol. Microbiol.">
        <title>Regulation of white and opaque cell-type formation in Candida albicans by Rtt109 and Hst3.</title>
        <authorList>
            <person name="Stevenson J.S."/>
            <person name="Liu H."/>
        </authorList>
    </citation>
    <scope>FUNCTION</scope>
</reference>
<protein>
    <recommendedName>
        <fullName>Histone acetyltransferase RTT109</fullName>
        <ecNumber evidence="7">2.3.1.48</ecNumber>
    </recommendedName>
</protein>
<proteinExistence type="evidence at protein level"/>
<sequence>MLPPDILQNGEFETIYFQTNPTYIKSPIHIPKSTIGKPDTVKIRHFFALLHQDLVVLGLEVFVYLQIYSDFVEKYVYVSKCDTVGLEKSTIKIGKVIGPVLQYIINYNGYKIKMKNLDEKSKDLSDPSTLVRLQRLRDKLPDIYPNLPYYNDIPPKEECIEYRTLPKTQNLRLCVFTKPAKEYLFPNSAKNPYKNLLNGQSLLRWWISIIDSITKGWNNHKLMIPGADKYATRKFIEKYSDWSEGHIFKKDGLAVQAIPLFPDDPKGRFLELVIVECRYGKMTVSRFYQELAYRQEFLLGDCVSLIGCCKENLEVTYHDDSVSTVTISEYKEFMNSLKSVDFSDRVEVSNFVSNYRKSK</sequence>
<feature type="chain" id="PRO_0000420188" description="Histone acetyltransferase RTT109">
    <location>
        <begin position="1"/>
        <end position="359"/>
    </location>
</feature>
<feature type="domain" description="Rtt109-type HAT" evidence="2">
    <location>
        <begin position="1"/>
        <end position="359"/>
    </location>
</feature>
<feature type="active site" description="Proton donor/acceptor" evidence="1">
    <location>
        <position position="264"/>
    </location>
</feature>
<feature type="binding site" evidence="1">
    <location>
        <position position="176"/>
    </location>
    <ligand>
        <name>acetyl-CoA</name>
        <dbReference type="ChEBI" id="CHEBI:57288"/>
    </ligand>
</feature>
<feature type="binding site" evidence="1">
    <location>
        <position position="180"/>
    </location>
    <ligand>
        <name>acetyl-CoA</name>
        <dbReference type="ChEBI" id="CHEBI:57288"/>
    </ligand>
</feature>
<feature type="binding site" evidence="1">
    <location>
        <begin position="195"/>
        <end position="197"/>
    </location>
    <ligand>
        <name>acetyl-CoA</name>
        <dbReference type="ChEBI" id="CHEBI:57288"/>
    </ligand>
</feature>
<feature type="binding site" evidence="1">
    <location>
        <position position="205"/>
    </location>
    <ligand>
        <name>acetyl-CoA</name>
        <dbReference type="ChEBI" id="CHEBI:57288"/>
    </ligand>
</feature>
<feature type="modified residue" description="N6-acetyllysine; by autocatalysis" evidence="1">
    <location>
        <position position="266"/>
    </location>
</feature>
<feature type="helix" evidence="8">
    <location>
        <begin position="4"/>
        <end position="7"/>
    </location>
</feature>
<feature type="helix" evidence="8">
    <location>
        <begin position="8"/>
        <end position="10"/>
    </location>
</feature>
<feature type="strand" evidence="8">
    <location>
        <begin position="12"/>
        <end position="19"/>
    </location>
</feature>
<feature type="strand" evidence="8">
    <location>
        <begin position="22"/>
        <end position="24"/>
    </location>
</feature>
<feature type="strand" evidence="8">
    <location>
        <begin position="39"/>
        <end position="51"/>
    </location>
</feature>
<feature type="strand" evidence="8">
    <location>
        <begin position="54"/>
        <end position="67"/>
    </location>
</feature>
<feature type="strand" evidence="8">
    <location>
        <begin position="72"/>
        <end position="83"/>
    </location>
</feature>
<feature type="helix" evidence="8">
    <location>
        <begin position="94"/>
        <end position="106"/>
    </location>
</feature>
<feature type="strand" evidence="8">
    <location>
        <begin position="167"/>
        <end position="177"/>
    </location>
</feature>
<feature type="strand" evidence="8">
    <location>
        <begin position="183"/>
        <end position="185"/>
    </location>
</feature>
<feature type="helix" evidence="8">
    <location>
        <begin position="188"/>
        <end position="190"/>
    </location>
</feature>
<feature type="helix" evidence="8">
    <location>
        <begin position="199"/>
        <end position="213"/>
    </location>
</feature>
<feature type="strand" evidence="8">
    <location>
        <begin position="218"/>
        <end position="223"/>
    </location>
</feature>
<feature type="helix" evidence="8">
    <location>
        <begin position="229"/>
        <end position="235"/>
    </location>
</feature>
<feature type="turn" evidence="8">
    <location>
        <begin position="236"/>
        <end position="238"/>
    </location>
</feature>
<feature type="strand" evidence="8">
    <location>
        <begin position="242"/>
        <end position="245"/>
    </location>
</feature>
<feature type="strand" evidence="8">
    <location>
        <begin position="251"/>
        <end position="253"/>
    </location>
</feature>
<feature type="helix" evidence="8">
    <location>
        <begin position="254"/>
        <end position="256"/>
    </location>
</feature>
<feature type="helix" evidence="8">
    <location>
        <begin position="268"/>
        <end position="275"/>
    </location>
</feature>
<feature type="turn" evidence="8">
    <location>
        <begin position="279"/>
        <end position="281"/>
    </location>
</feature>
<feature type="helix" evidence="8">
    <location>
        <begin position="284"/>
        <end position="291"/>
    </location>
</feature>
<feature type="helix" evidence="8">
    <location>
        <begin position="295"/>
        <end position="298"/>
    </location>
</feature>
<feature type="strand" evidence="8">
    <location>
        <begin position="300"/>
        <end position="302"/>
    </location>
</feature>
<feature type="strand" evidence="8">
    <location>
        <begin position="304"/>
        <end position="314"/>
    </location>
</feature>
<feature type="strand" evidence="8">
    <location>
        <begin position="323"/>
        <end position="325"/>
    </location>
</feature>
<feature type="helix" evidence="8">
    <location>
        <begin position="327"/>
        <end position="338"/>
    </location>
</feature>
<feature type="helix" evidence="8">
    <location>
        <begin position="345"/>
        <end position="355"/>
    </location>
</feature>
<comment type="function">
    <text evidence="3 4 5">Histone chaperone-dependent acetylase that modifies 'Lys-56' of histone H3 (H3K56ac), to promote genomic stability, DNA repair and transcriptional regulation during mitotic S-phase (PubMed:20080646, PubMed:20601951). Plays an important role in the regulation of white-opaque genotoxin induced-switching (PubMed:21749487).</text>
</comment>
<comment type="catalytic activity">
    <reaction evidence="7">
        <text>L-lysyl-[histone] + acetyl-CoA = N(6)-acetyl-L-lysyl-[histone] + CoA + H(+)</text>
        <dbReference type="Rhea" id="RHEA:21992"/>
        <dbReference type="Rhea" id="RHEA-COMP:9845"/>
        <dbReference type="Rhea" id="RHEA-COMP:11338"/>
        <dbReference type="ChEBI" id="CHEBI:15378"/>
        <dbReference type="ChEBI" id="CHEBI:29969"/>
        <dbReference type="ChEBI" id="CHEBI:57287"/>
        <dbReference type="ChEBI" id="CHEBI:57288"/>
        <dbReference type="ChEBI" id="CHEBI:61930"/>
        <dbReference type="EC" id="2.3.1.48"/>
    </reaction>
    <physiologicalReaction direction="left-to-right" evidence="7">
        <dbReference type="Rhea" id="RHEA:21993"/>
    </physiologicalReaction>
</comment>
<comment type="subcellular location">
    <subcellularLocation>
        <location evidence="1">Nucleus</location>
    </subcellularLocation>
</comment>
<comment type="disruption phenotype">
    <text evidence="3">Leads to a decreased pathogenicity in mice and increased susceptibility to killing by macrophages in vitro.</text>
</comment>
<comment type="similarity">
    <text evidence="6">Belongs to the RTT109 family.</text>
</comment>
<accession>Q5AAJ8</accession>
<accession>A0A1D8PRQ8</accession>
<name>RT109_CANAL</name>
<dbReference type="EC" id="2.3.1.48" evidence="7"/>
<dbReference type="EMBL" id="CP017630">
    <property type="protein sequence ID" value="AOW30812.1"/>
    <property type="molecule type" value="Genomic_DNA"/>
</dbReference>
<dbReference type="RefSeq" id="XP_718648.1">
    <property type="nucleotide sequence ID" value="XM_713555.1"/>
</dbReference>
<dbReference type="PDB" id="7BWZ">
    <property type="method" value="X-ray"/>
    <property type="resolution" value="1.77 A"/>
    <property type="chains" value="A=1-359"/>
</dbReference>
<dbReference type="PDB" id="7BX0">
    <property type="method" value="X-ray"/>
    <property type="resolution" value="1.50 A"/>
    <property type="chains" value="A=1-359"/>
</dbReference>
<dbReference type="PDB" id="7BX1">
    <property type="method" value="X-ray"/>
    <property type="resolution" value="1.58 A"/>
    <property type="chains" value="A=1-359"/>
</dbReference>
<dbReference type="PDB" id="7BXW">
    <property type="method" value="X-ray"/>
    <property type="resolution" value="1.78 A"/>
    <property type="chains" value="A=1-359"/>
</dbReference>
<dbReference type="PDB" id="7C3O">
    <property type="method" value="X-ray"/>
    <property type="resolution" value="1.89 A"/>
    <property type="chains" value="A=1-359"/>
</dbReference>
<dbReference type="PDB" id="8GQ3">
    <property type="method" value="X-ray"/>
    <property type="resolution" value="1.77 A"/>
    <property type="chains" value="A=1-359"/>
</dbReference>
<dbReference type="PDB" id="8GQ4">
    <property type="method" value="X-ray"/>
    <property type="resolution" value="1.77 A"/>
    <property type="chains" value="A=1-359"/>
</dbReference>
<dbReference type="PDBsum" id="7BWZ"/>
<dbReference type="PDBsum" id="7BX0"/>
<dbReference type="PDBsum" id="7BX1"/>
<dbReference type="PDBsum" id="7BXW"/>
<dbReference type="PDBsum" id="7C3O"/>
<dbReference type="PDBsum" id="8GQ3"/>
<dbReference type="PDBsum" id="8GQ4"/>
<dbReference type="SMR" id="Q5AAJ8"/>
<dbReference type="BioGRID" id="1222772">
    <property type="interactions" value="1"/>
</dbReference>
<dbReference type="FunCoup" id="Q5AAJ8">
    <property type="interactions" value="35"/>
</dbReference>
<dbReference type="STRING" id="237561.Q5AAJ8"/>
<dbReference type="EnsemblFungi" id="CR_00410W_A-T">
    <property type="protein sequence ID" value="CR_00410W_A-T-p1"/>
    <property type="gene ID" value="CR_00410W_A"/>
</dbReference>
<dbReference type="GeneID" id="3639678"/>
<dbReference type="KEGG" id="cal:CAALFM_CR00410WA"/>
<dbReference type="CGD" id="CAL0000176178">
    <property type="gene designation" value="RTT109"/>
</dbReference>
<dbReference type="VEuPathDB" id="FungiDB:CR_00410W_A"/>
<dbReference type="eggNOG" id="KOG4534">
    <property type="taxonomic scope" value="Eukaryota"/>
</dbReference>
<dbReference type="HOGENOM" id="CLU_050421_0_0_1"/>
<dbReference type="InParanoid" id="Q5AAJ8"/>
<dbReference type="OMA" id="FLEHLIV"/>
<dbReference type="OrthoDB" id="3361892at2759"/>
<dbReference type="PRO" id="PR:Q5AAJ8"/>
<dbReference type="Proteomes" id="UP000000559">
    <property type="component" value="Chromosome R"/>
</dbReference>
<dbReference type="GO" id="GO:0005634">
    <property type="term" value="C:nucleus"/>
    <property type="evidence" value="ECO:0000318"/>
    <property type="project" value="GO_Central"/>
</dbReference>
<dbReference type="GO" id="GO:0010484">
    <property type="term" value="F:histone H3 acetyltransferase activity"/>
    <property type="evidence" value="ECO:0000315"/>
    <property type="project" value="CGD"/>
</dbReference>
<dbReference type="GO" id="GO:0032931">
    <property type="term" value="F:histone H3K56 acetyltransferase activity"/>
    <property type="evidence" value="ECO:0000315"/>
    <property type="project" value="CGD"/>
</dbReference>
<dbReference type="GO" id="GO:0006974">
    <property type="term" value="P:DNA damage response"/>
    <property type="evidence" value="ECO:0000318"/>
    <property type="project" value="GO_Central"/>
</dbReference>
<dbReference type="GO" id="GO:0030447">
    <property type="term" value="P:filamentous growth"/>
    <property type="evidence" value="ECO:0000315"/>
    <property type="project" value="CGD"/>
</dbReference>
<dbReference type="GO" id="GO:0044182">
    <property type="term" value="P:filamentous growth of a population of unicellular organisms"/>
    <property type="evidence" value="ECO:0000315"/>
    <property type="project" value="CGD"/>
</dbReference>
<dbReference type="GO" id="GO:1900429">
    <property type="term" value="P:negative regulation of filamentous growth of a population of unicellular organisms"/>
    <property type="evidence" value="ECO:0000315"/>
    <property type="project" value="CGD"/>
</dbReference>
<dbReference type="GO" id="GO:0036166">
    <property type="term" value="P:phenotypic switching"/>
    <property type="evidence" value="ECO:0000315"/>
    <property type="project" value="CGD"/>
</dbReference>
<dbReference type="GO" id="GO:0006355">
    <property type="term" value="P:regulation of DNA-templated transcription"/>
    <property type="evidence" value="ECO:0007669"/>
    <property type="project" value="InterPro"/>
</dbReference>
<dbReference type="GO" id="GO:1900239">
    <property type="term" value="P:regulation of phenotypic switching"/>
    <property type="evidence" value="ECO:0000315"/>
    <property type="project" value="CGD"/>
</dbReference>
<dbReference type="InterPro" id="IPR051236">
    <property type="entry name" value="HAT_RTT109-like"/>
</dbReference>
<dbReference type="InterPro" id="IPR013178">
    <property type="entry name" value="Histone_AcTrfase_Rtt109/CBP"/>
</dbReference>
<dbReference type="InterPro" id="IPR016849">
    <property type="entry name" value="Rtt109"/>
</dbReference>
<dbReference type="PANTHER" id="PTHR31571">
    <property type="entry name" value="ALTERED INHERITANCE OF MITOCHONDRIA PROTEIN 6"/>
    <property type="match status" value="1"/>
</dbReference>
<dbReference type="PANTHER" id="PTHR31571:SF2">
    <property type="entry name" value="HISTONE ACETYLTRANSFERASE RTT109"/>
    <property type="match status" value="1"/>
</dbReference>
<dbReference type="Pfam" id="PF08214">
    <property type="entry name" value="HAT_KAT11"/>
    <property type="match status" value="1"/>
</dbReference>
<dbReference type="PIRSF" id="PIRSF027124">
    <property type="entry name" value="Histone_acetylase_Rtt109"/>
    <property type="match status" value="1"/>
</dbReference>
<dbReference type="SMART" id="SM01250">
    <property type="entry name" value="KAT11"/>
    <property type="match status" value="1"/>
</dbReference>
<dbReference type="PROSITE" id="PS51728">
    <property type="entry name" value="RTT109_HAT"/>
    <property type="match status" value="1"/>
</dbReference>